<sequence length="498" mass="54878">MDNELFMNTEFPPPPEMATHFEHQQSSSSAMMLNWALMDPNPHQDSSFLWEKSTEQQQQQSIFDSALSSLVSSPTPSNSNFSGGGGDGFLIRELIGKLGNIGNNNNNSGEIYGTPMSRSASCYATPMSSPPPPTNSNSQMMMNRTTPLTEFSADPGFAERAARFSCFGSRSFNGRTNTNLPINNGNNMVNNSGKLTRVSSTPALKALVSPEVTPGGEFSRKRKSVPKGKSKENPISTASPSPSFSKTAEKNGGKGGSKSSEEKGGKRRREEEDDEEEEGEGEGNKSNNTKPPEPPKDYIHVRARRGQATDSHSLAERVRREKIGERMKLLQDLVPGCNKVTGKALMLDEIINYVQSLQRQVEFLSMKLSSVNDTRLDFNVDALVSKDVMIPSSNNRLHEEGLQSKSSSHHHQQQLNIYNNNSQLLPNISSNNMMLQSPMNSLETSTLARSFTHLPTLTQFTDSISQYQMFSEEDLQSIVGMGVAENPNNESQHMKIEL</sequence>
<dbReference type="EMBL" id="AF488610">
    <property type="protein sequence ID" value="AAM10957.1"/>
    <property type="molecule type" value="mRNA"/>
</dbReference>
<dbReference type="EMBL" id="AB015468">
    <property type="protein sequence ID" value="BAB10689.1"/>
    <property type="molecule type" value="Genomic_DNA"/>
</dbReference>
<dbReference type="EMBL" id="CP002688">
    <property type="protein sequence ID" value="AED95688.1"/>
    <property type="molecule type" value="Genomic_DNA"/>
</dbReference>
<dbReference type="EMBL" id="BT002945">
    <property type="protein sequence ID" value="AAO22758.1"/>
    <property type="molecule type" value="mRNA"/>
</dbReference>
<dbReference type="EMBL" id="BT005637">
    <property type="protein sequence ID" value="AAO64057.1"/>
    <property type="molecule type" value="mRNA"/>
</dbReference>
<dbReference type="RefSeq" id="NP_199667.1">
    <property type="nucleotide sequence ID" value="NM_124232.4"/>
</dbReference>
<dbReference type="SMR" id="Q9FJL4"/>
<dbReference type="BioGRID" id="20158">
    <property type="interactions" value="3"/>
</dbReference>
<dbReference type="FunCoup" id="Q9FJL4">
    <property type="interactions" value="157"/>
</dbReference>
<dbReference type="IntAct" id="Q9FJL4">
    <property type="interactions" value="1"/>
</dbReference>
<dbReference type="STRING" id="3702.Q9FJL4"/>
<dbReference type="GlyGen" id="Q9FJL4">
    <property type="glycosylation" value="2 sites"/>
</dbReference>
<dbReference type="iPTMnet" id="Q9FJL4"/>
<dbReference type="PaxDb" id="3702-AT5G48560.1"/>
<dbReference type="EnsemblPlants" id="AT5G48560.1">
    <property type="protein sequence ID" value="AT5G48560.1"/>
    <property type="gene ID" value="AT5G48560"/>
</dbReference>
<dbReference type="GeneID" id="834912"/>
<dbReference type="Gramene" id="AT5G48560.1">
    <property type="protein sequence ID" value="AT5G48560.1"/>
    <property type="gene ID" value="AT5G48560"/>
</dbReference>
<dbReference type="KEGG" id="ath:AT5G48560"/>
<dbReference type="Araport" id="AT5G48560"/>
<dbReference type="TAIR" id="AT5G48560">
    <property type="gene designation" value="CIB2"/>
</dbReference>
<dbReference type="eggNOG" id="ENOG502QRSF">
    <property type="taxonomic scope" value="Eukaryota"/>
</dbReference>
<dbReference type="HOGENOM" id="CLU_025018_6_1_1"/>
<dbReference type="InParanoid" id="Q9FJL4"/>
<dbReference type="OMA" id="NNESQHM"/>
<dbReference type="PhylomeDB" id="Q9FJL4"/>
<dbReference type="PRO" id="PR:Q9FJL4"/>
<dbReference type="Proteomes" id="UP000006548">
    <property type="component" value="Chromosome 5"/>
</dbReference>
<dbReference type="ExpressionAtlas" id="Q9FJL4">
    <property type="expression patterns" value="baseline and differential"/>
</dbReference>
<dbReference type="GO" id="GO:0005634">
    <property type="term" value="C:nucleus"/>
    <property type="evidence" value="ECO:0000314"/>
    <property type="project" value="TAIR"/>
</dbReference>
<dbReference type="GO" id="GO:0003677">
    <property type="term" value="F:DNA binding"/>
    <property type="evidence" value="ECO:0007669"/>
    <property type="project" value="UniProtKB-KW"/>
</dbReference>
<dbReference type="GO" id="GO:0003700">
    <property type="term" value="F:DNA-binding transcription factor activity"/>
    <property type="evidence" value="ECO:0000250"/>
    <property type="project" value="TAIR"/>
</dbReference>
<dbReference type="GO" id="GO:0046983">
    <property type="term" value="F:protein dimerization activity"/>
    <property type="evidence" value="ECO:0007669"/>
    <property type="project" value="InterPro"/>
</dbReference>
<dbReference type="GO" id="GO:0006355">
    <property type="term" value="P:regulation of DNA-templated transcription"/>
    <property type="evidence" value="ECO:0000304"/>
    <property type="project" value="TAIR"/>
</dbReference>
<dbReference type="GO" id="GO:0009637">
    <property type="term" value="P:response to blue light"/>
    <property type="evidence" value="ECO:0000314"/>
    <property type="project" value="UniProtKB"/>
</dbReference>
<dbReference type="CDD" id="cd18919">
    <property type="entry name" value="bHLH_AtBPE_like"/>
    <property type="match status" value="1"/>
</dbReference>
<dbReference type="FunFam" id="4.10.280.10:FF:000002">
    <property type="entry name" value="Basic helix-loop-helix transcription factor"/>
    <property type="match status" value="1"/>
</dbReference>
<dbReference type="Gene3D" id="4.10.280.10">
    <property type="entry name" value="Helix-loop-helix DNA-binding domain"/>
    <property type="match status" value="1"/>
</dbReference>
<dbReference type="InterPro" id="IPR011598">
    <property type="entry name" value="bHLH_dom"/>
</dbReference>
<dbReference type="InterPro" id="IPR024097">
    <property type="entry name" value="bHLH_ZIP_TF"/>
</dbReference>
<dbReference type="InterPro" id="IPR036638">
    <property type="entry name" value="HLH_DNA-bd_sf"/>
</dbReference>
<dbReference type="PANTHER" id="PTHR12565">
    <property type="entry name" value="STEROL REGULATORY ELEMENT-BINDING PROTEIN"/>
    <property type="match status" value="1"/>
</dbReference>
<dbReference type="PANTHER" id="PTHR12565:SF325">
    <property type="entry name" value="TRANSCRIPTION FACTOR BHLH78"/>
    <property type="match status" value="1"/>
</dbReference>
<dbReference type="Pfam" id="PF00010">
    <property type="entry name" value="HLH"/>
    <property type="match status" value="1"/>
</dbReference>
<dbReference type="SMART" id="SM00353">
    <property type="entry name" value="HLH"/>
    <property type="match status" value="1"/>
</dbReference>
<dbReference type="SUPFAM" id="SSF47459">
    <property type="entry name" value="HLH, helix-loop-helix DNA-binding domain"/>
    <property type="match status" value="1"/>
</dbReference>
<dbReference type="PROSITE" id="PS50888">
    <property type="entry name" value="BHLH"/>
    <property type="match status" value="1"/>
</dbReference>
<organism>
    <name type="scientific">Arabidopsis thaliana</name>
    <name type="common">Mouse-ear cress</name>
    <dbReference type="NCBI Taxonomy" id="3702"/>
    <lineage>
        <taxon>Eukaryota</taxon>
        <taxon>Viridiplantae</taxon>
        <taxon>Streptophyta</taxon>
        <taxon>Embryophyta</taxon>
        <taxon>Tracheophyta</taxon>
        <taxon>Spermatophyta</taxon>
        <taxon>Magnoliopsida</taxon>
        <taxon>eudicotyledons</taxon>
        <taxon>Gunneridae</taxon>
        <taxon>Pentapetalae</taxon>
        <taxon>rosids</taxon>
        <taxon>malvids</taxon>
        <taxon>Brassicales</taxon>
        <taxon>Brassicaceae</taxon>
        <taxon>Camelineae</taxon>
        <taxon>Arabidopsis</taxon>
    </lineage>
</organism>
<keyword id="KW-0238">DNA-binding</keyword>
<keyword id="KW-0539">Nucleus</keyword>
<keyword id="KW-1185">Reference proteome</keyword>
<keyword id="KW-0804">Transcription</keyword>
<keyword id="KW-0805">Transcription regulation</keyword>
<proteinExistence type="evidence at protein level"/>
<name>BH078_ARATH</name>
<gene>
    <name type="primary">BHLH78</name>
    <name type="synonym">CIB2</name>
    <name type="synonym">EN86</name>
    <name type="ordered locus">At5g48560</name>
    <name type="ORF">K15N18.2</name>
</gene>
<accession>Q9FJL4</accession>
<accession>Q8S3D4</accession>
<evidence type="ECO:0000250" key="1">
    <source>
        <dbReference type="UniProtKB" id="Q8GY61"/>
    </source>
</evidence>
<evidence type="ECO:0000255" key="2">
    <source>
        <dbReference type="PROSITE-ProRule" id="PRU00981"/>
    </source>
</evidence>
<evidence type="ECO:0000256" key="3">
    <source>
        <dbReference type="SAM" id="MobiDB-lite"/>
    </source>
</evidence>
<evidence type="ECO:0000269" key="4">
    <source>
    </source>
</evidence>
<evidence type="ECO:0000269" key="5">
    <source>
    </source>
</evidence>
<evidence type="ECO:0000305" key="6"/>
<reference key="1">
    <citation type="journal article" date="2003" name="Mol. Biol. Evol.">
        <title>The basic helix-loop-helix transcription factor family in plants: a genome-wide study of protein structure and functional diversity.</title>
        <authorList>
            <person name="Heim M.A."/>
            <person name="Jakoby M."/>
            <person name="Werber M."/>
            <person name="Martin C."/>
            <person name="Weisshaar B."/>
            <person name="Bailey P.C."/>
        </authorList>
    </citation>
    <scope>NUCLEOTIDE SEQUENCE [MRNA]</scope>
    <scope>TISSUE SPECIFICITY</scope>
    <scope>GENE FAMILY</scope>
    <scope>NOMENCLATURE</scope>
    <source>
        <strain>cv. Columbia</strain>
    </source>
</reference>
<reference key="2">
    <citation type="journal article" date="1998" name="DNA Res.">
        <title>Structural analysis of Arabidopsis thaliana chromosome 5. VII. Sequence features of the regions of 1,013,767 bp covered by sixteen physically assigned P1 and TAC clones.</title>
        <authorList>
            <person name="Nakamura Y."/>
            <person name="Sato S."/>
            <person name="Asamizu E."/>
            <person name="Kaneko T."/>
            <person name="Kotani H."/>
            <person name="Miyajima N."/>
            <person name="Tabata S."/>
        </authorList>
    </citation>
    <scope>NUCLEOTIDE SEQUENCE [LARGE SCALE GENOMIC DNA]</scope>
    <source>
        <strain>cv. Columbia</strain>
    </source>
</reference>
<reference key="3">
    <citation type="journal article" date="2017" name="Plant J.">
        <title>Araport11: a complete reannotation of the Arabidopsis thaliana reference genome.</title>
        <authorList>
            <person name="Cheng C.Y."/>
            <person name="Krishnakumar V."/>
            <person name="Chan A.P."/>
            <person name="Thibaud-Nissen F."/>
            <person name="Schobel S."/>
            <person name="Town C.D."/>
        </authorList>
    </citation>
    <scope>GENOME REANNOTATION</scope>
    <source>
        <strain>cv. Columbia</strain>
    </source>
</reference>
<reference key="4">
    <citation type="journal article" date="2003" name="Science">
        <title>Empirical analysis of transcriptional activity in the Arabidopsis genome.</title>
        <authorList>
            <person name="Yamada K."/>
            <person name="Lim J."/>
            <person name="Dale J.M."/>
            <person name="Chen H."/>
            <person name="Shinn P."/>
            <person name="Palm C.J."/>
            <person name="Southwick A.M."/>
            <person name="Wu H.C."/>
            <person name="Kim C.J."/>
            <person name="Nguyen M."/>
            <person name="Pham P.K."/>
            <person name="Cheuk R.F."/>
            <person name="Karlin-Newmann G."/>
            <person name="Liu S.X."/>
            <person name="Lam B."/>
            <person name="Sakano H."/>
            <person name="Wu T."/>
            <person name="Yu G."/>
            <person name="Miranda M."/>
            <person name="Quach H.L."/>
            <person name="Tripp M."/>
            <person name="Chang C.H."/>
            <person name="Lee J.M."/>
            <person name="Toriumi M.J."/>
            <person name="Chan M.M."/>
            <person name="Tang C.C."/>
            <person name="Onodera C.S."/>
            <person name="Deng J.M."/>
            <person name="Akiyama K."/>
            <person name="Ansari Y."/>
            <person name="Arakawa T."/>
            <person name="Banh J."/>
            <person name="Banno F."/>
            <person name="Bowser L."/>
            <person name="Brooks S.Y."/>
            <person name="Carninci P."/>
            <person name="Chao Q."/>
            <person name="Choy N."/>
            <person name="Enju A."/>
            <person name="Goldsmith A.D."/>
            <person name="Gurjal M."/>
            <person name="Hansen N.F."/>
            <person name="Hayashizaki Y."/>
            <person name="Johnson-Hopson C."/>
            <person name="Hsuan V.W."/>
            <person name="Iida K."/>
            <person name="Karnes M."/>
            <person name="Khan S."/>
            <person name="Koesema E."/>
            <person name="Ishida J."/>
            <person name="Jiang P.X."/>
            <person name="Jones T."/>
            <person name="Kawai J."/>
            <person name="Kamiya A."/>
            <person name="Meyers C."/>
            <person name="Nakajima M."/>
            <person name="Narusaka M."/>
            <person name="Seki M."/>
            <person name="Sakurai T."/>
            <person name="Satou M."/>
            <person name="Tamse R."/>
            <person name="Vaysberg M."/>
            <person name="Wallender E.K."/>
            <person name="Wong C."/>
            <person name="Yamamura Y."/>
            <person name="Yuan S."/>
            <person name="Shinozaki K."/>
            <person name="Davis R.W."/>
            <person name="Theologis A."/>
            <person name="Ecker J.R."/>
        </authorList>
    </citation>
    <scope>NUCLEOTIDE SEQUENCE [LARGE SCALE MRNA]</scope>
    <source>
        <strain>cv. Columbia</strain>
    </source>
</reference>
<reference key="5">
    <citation type="journal article" date="2003" name="Plant Cell">
        <title>The Arabidopsis basic/helix-loop-helix transcription factor family.</title>
        <authorList>
            <person name="Toledo-Ortiz G."/>
            <person name="Huq E."/>
            <person name="Quail P.H."/>
        </authorList>
    </citation>
    <scope>GENE FAMILY</scope>
</reference>
<reference key="6">
    <citation type="journal article" date="2003" name="Plant Cell">
        <title>Update on the basic helix-loop-helix transcription factor gene family in Arabidopsis thaliana.</title>
        <authorList>
            <person name="Bailey P.C."/>
            <person name="Martin C."/>
            <person name="Toledo-Ortiz G."/>
            <person name="Quail P.H."/>
            <person name="Huq E."/>
            <person name="Heim M.A."/>
            <person name="Jakoby M."/>
            <person name="Werber M."/>
            <person name="Weisshaar B."/>
        </authorList>
    </citation>
    <scope>GENE FAMILY</scope>
    <scope>NOMENCLATURE</scope>
</reference>
<reference key="7">
    <citation type="journal article" date="2013" name="PLoS Genet.">
        <title>Multiple bHLH proteins form heterodimers to mediate CRY2-dependent regulation of flowering-time in Arabidopsis.</title>
        <authorList>
            <person name="Liu Y."/>
            <person name="Li X."/>
            <person name="Li K."/>
            <person name="Liu H."/>
            <person name="Lin C."/>
        </authorList>
    </citation>
    <scope>FUNCTION</scope>
    <scope>INTERACTION WITH CRY2</scope>
</reference>
<protein>
    <recommendedName>
        <fullName>Transcription factor bHLH78</fullName>
    </recommendedName>
    <alternativeName>
        <fullName>Basic helix-loop-helix protein 78</fullName>
        <shortName>AtbHLH78</shortName>
        <shortName>bHLH 78</shortName>
    </alternativeName>
    <alternativeName>
        <fullName>Transcription factor EN 86</fullName>
    </alternativeName>
    <alternativeName>
        <fullName>bHLH transcription factor bHLH078</fullName>
    </alternativeName>
</protein>
<comment type="function">
    <text evidence="1 5">Transcription factor that binds DNA to G box 5'-CACGTG-3' and to E-box 5'-CANNTG-3' (By similarity). Binds to chromatin DNA of the FT gene and promotes its expression, and thus triggers flowering in response to blue light (PubMed:24130508).</text>
</comment>
<comment type="subunit">
    <text evidence="5 6">Homodimer (Probable). Binds reversibly to CRY2 after blue light illumination (PubMed:24130508).</text>
</comment>
<comment type="subcellular location">
    <subcellularLocation>
        <location evidence="2">Nucleus</location>
    </subcellularLocation>
</comment>
<comment type="tissue specificity">
    <text evidence="4">Expressed constitutively in roots, leaves, stems, and flowers.</text>
</comment>
<feature type="chain" id="PRO_0000358770" description="Transcription factor bHLH78">
    <location>
        <begin position="1"/>
        <end position="498"/>
    </location>
</feature>
<feature type="domain" description="bHLH" evidence="2">
    <location>
        <begin position="307"/>
        <end position="357"/>
    </location>
</feature>
<feature type="region of interest" description="Disordered" evidence="3">
    <location>
        <begin position="1"/>
        <end position="24"/>
    </location>
</feature>
<feature type="region of interest" description="Disordered" evidence="3">
    <location>
        <begin position="207"/>
        <end position="297"/>
    </location>
</feature>
<feature type="compositionally biased region" description="Polar residues" evidence="3">
    <location>
        <begin position="233"/>
        <end position="246"/>
    </location>
</feature>
<feature type="compositionally biased region" description="Basic and acidic residues" evidence="3">
    <location>
        <begin position="259"/>
        <end position="270"/>
    </location>
</feature>
<feature type="compositionally biased region" description="Acidic residues" evidence="3">
    <location>
        <begin position="271"/>
        <end position="281"/>
    </location>
</feature>
<feature type="sequence conflict" description="In Ref. 1; AAM10957." evidence="6" ref="1">
    <original>E</original>
    <variation>G</variation>
    <location>
        <position position="280"/>
    </location>
</feature>